<name>NOD2_BOVIN</name>
<feature type="chain" id="PRO_0000375804" description="Nucleotide-binding oligomerization domain-containing protein 2">
    <location>
        <begin position="1"/>
        <end position="1013"/>
    </location>
</feature>
<feature type="domain" description="CARD 1" evidence="4">
    <location>
        <begin position="1"/>
        <end position="95"/>
    </location>
</feature>
<feature type="domain" description="CARD 2" evidence="4">
    <location>
        <begin position="99"/>
        <end position="191"/>
    </location>
</feature>
<feature type="domain" description="NACHT" evidence="5">
    <location>
        <begin position="266"/>
        <end position="591"/>
    </location>
</feature>
<feature type="repeat" description="LRR 1">
    <location>
        <begin position="764"/>
        <end position="785"/>
    </location>
</feature>
<feature type="repeat" description="LRR 2">
    <location>
        <begin position="789"/>
        <end position="809"/>
    </location>
</feature>
<feature type="repeat" description="LRR 3">
    <location>
        <begin position="817"/>
        <end position="838"/>
    </location>
</feature>
<feature type="repeat" description="LRR 4">
    <location>
        <begin position="845"/>
        <end position="866"/>
    </location>
</feature>
<feature type="repeat" description="LRR 5">
    <location>
        <begin position="873"/>
        <end position="893"/>
    </location>
</feature>
<feature type="repeat" description="LRR 6">
    <location>
        <begin position="901"/>
        <end position="922"/>
    </location>
</feature>
<feature type="repeat" description="LRR 7">
    <location>
        <begin position="929"/>
        <end position="949"/>
    </location>
</feature>
<feature type="repeat" description="LRR 8">
    <location>
        <begin position="957"/>
        <end position="978"/>
    </location>
</feature>
<feature type="repeat" description="LRR 9">
    <location>
        <begin position="985"/>
        <end position="1008"/>
    </location>
</feature>
<feature type="region of interest" description="Disordered" evidence="6">
    <location>
        <begin position="82"/>
        <end position="106"/>
    </location>
</feature>
<feature type="region of interest" description="Required for CARD9 binding" evidence="3">
    <location>
        <begin position="214"/>
        <end position="247"/>
    </location>
</feature>
<feature type="short sequence motif" description="ATG16L1-binding motif" evidence="3">
    <location>
        <begin position="36"/>
        <end position="50"/>
    </location>
</feature>
<feature type="binding site" evidence="1">
    <location>
        <position position="212"/>
    </location>
    <ligand>
        <name>ADP</name>
        <dbReference type="ChEBI" id="CHEBI:456216"/>
    </ligand>
</feature>
<feature type="binding site" evidence="1">
    <location>
        <position position="225"/>
    </location>
    <ligand>
        <name>ADP</name>
        <dbReference type="ChEBI" id="CHEBI:456216"/>
    </ligand>
</feature>
<feature type="binding site" evidence="1">
    <location>
        <position position="226"/>
    </location>
    <ligand>
        <name>ADP</name>
        <dbReference type="ChEBI" id="CHEBI:456216"/>
    </ligand>
</feature>
<feature type="binding site" evidence="5">
    <location>
        <begin position="272"/>
        <end position="279"/>
    </location>
    <ligand>
        <name>ATP</name>
        <dbReference type="ChEBI" id="CHEBI:30616"/>
    </ligand>
</feature>
<feature type="binding site" evidence="1">
    <location>
        <position position="275"/>
    </location>
    <ligand>
        <name>ADP</name>
        <dbReference type="ChEBI" id="CHEBI:456216"/>
    </ligand>
</feature>
<feature type="binding site" evidence="1">
    <location>
        <position position="276"/>
    </location>
    <ligand>
        <name>ADP</name>
        <dbReference type="ChEBI" id="CHEBI:456216"/>
    </ligand>
</feature>
<feature type="binding site" evidence="1">
    <location>
        <position position="277"/>
    </location>
    <ligand>
        <name>ADP</name>
        <dbReference type="ChEBI" id="CHEBI:456216"/>
    </ligand>
</feature>
<feature type="binding site" evidence="1">
    <location>
        <position position="278"/>
    </location>
    <ligand>
        <name>ADP</name>
        <dbReference type="ChEBI" id="CHEBI:456216"/>
    </ligand>
</feature>
<feature type="binding site" evidence="1">
    <location>
        <position position="279"/>
    </location>
    <ligand>
        <name>ADP</name>
        <dbReference type="ChEBI" id="CHEBI:456216"/>
    </ligand>
</feature>
<feature type="binding site" evidence="1">
    <location>
        <position position="280"/>
    </location>
    <ligand>
        <name>ADP</name>
        <dbReference type="ChEBI" id="CHEBI:456216"/>
    </ligand>
</feature>
<feature type="binding site" evidence="1">
    <location>
        <position position="576"/>
    </location>
    <ligand>
        <name>ADP</name>
        <dbReference type="ChEBI" id="CHEBI:456216"/>
    </ligand>
</feature>
<feature type="lipid moiety-binding region" description="S-palmitoyl cysteine" evidence="3">
    <location>
        <position position="368"/>
    </location>
</feature>
<feature type="sequence variant" evidence="7">
    <original>T</original>
    <variation>A</variation>
    <location>
        <position position="70"/>
    </location>
</feature>
<feature type="sequence variant" evidence="7">
    <original>V</original>
    <variation>M</variation>
    <location>
        <position position="196"/>
    </location>
</feature>
<feature type="sequence variant" evidence="7">
    <original>T</original>
    <variation>N</variation>
    <location>
        <position position="505"/>
    </location>
</feature>
<feature type="sequence variant" evidence="7">
    <original>R</original>
    <variation>Q</variation>
    <location>
        <position position="681"/>
    </location>
</feature>
<feature type="sequence variant" evidence="7">
    <original>R</original>
    <variation>H</variation>
    <location>
        <position position="689"/>
    </location>
</feature>
<feature type="sequence variant" evidence="7">
    <original>C</original>
    <variation>R</variation>
    <location>
        <position position="733"/>
    </location>
</feature>
<feature type="sequence variant" evidence="7">
    <original>Q</original>
    <variation>L</variation>
    <location>
        <position position="1007"/>
    </location>
</feature>
<dbReference type="EMBL" id="AY518737">
    <property type="protein sequence ID" value="AAS09824.1"/>
    <property type="molecule type" value="mRNA"/>
</dbReference>
<dbReference type="EMBL" id="AY518748">
    <property type="protein sequence ID" value="AAS09826.1"/>
    <property type="molecule type" value="Genomic_DNA"/>
</dbReference>
<dbReference type="EMBL" id="AY518739">
    <property type="protein sequence ID" value="AAS09826.1"/>
    <property type="status" value="JOINED"/>
    <property type="molecule type" value="Genomic_DNA"/>
</dbReference>
<dbReference type="EMBL" id="AY518740">
    <property type="protein sequence ID" value="AAS09826.1"/>
    <property type="status" value="JOINED"/>
    <property type="molecule type" value="Genomic_DNA"/>
</dbReference>
<dbReference type="EMBL" id="AY518741">
    <property type="protein sequence ID" value="AAS09826.1"/>
    <property type="status" value="JOINED"/>
    <property type="molecule type" value="Genomic_DNA"/>
</dbReference>
<dbReference type="EMBL" id="AY518742">
    <property type="protein sequence ID" value="AAS09826.1"/>
    <property type="status" value="JOINED"/>
    <property type="molecule type" value="Genomic_DNA"/>
</dbReference>
<dbReference type="EMBL" id="AY518743">
    <property type="protein sequence ID" value="AAS09826.1"/>
    <property type="status" value="JOINED"/>
    <property type="molecule type" value="Genomic_DNA"/>
</dbReference>
<dbReference type="EMBL" id="AY518744">
    <property type="protein sequence ID" value="AAS09826.1"/>
    <property type="status" value="JOINED"/>
    <property type="molecule type" value="Genomic_DNA"/>
</dbReference>
<dbReference type="EMBL" id="AY518745">
    <property type="protein sequence ID" value="AAS09826.1"/>
    <property type="status" value="JOINED"/>
    <property type="molecule type" value="Genomic_DNA"/>
</dbReference>
<dbReference type="EMBL" id="AY518746">
    <property type="protein sequence ID" value="AAS09826.1"/>
    <property type="status" value="JOINED"/>
    <property type="molecule type" value="Genomic_DNA"/>
</dbReference>
<dbReference type="EMBL" id="AY518747">
    <property type="protein sequence ID" value="AAS09826.1"/>
    <property type="status" value="JOINED"/>
    <property type="molecule type" value="Genomic_DNA"/>
</dbReference>
<dbReference type="RefSeq" id="NP_001002889.1">
    <property type="nucleotide sequence ID" value="NM_001002889.1"/>
</dbReference>
<dbReference type="RefSeq" id="XP_005218524.1">
    <property type="nucleotide sequence ID" value="XM_005218467.5"/>
</dbReference>
<dbReference type="RefSeq" id="XP_010812724.1">
    <property type="nucleotide sequence ID" value="XM_010814422.4"/>
</dbReference>
<dbReference type="RefSeq" id="XP_015331193.1">
    <property type="nucleotide sequence ID" value="XM_015475707.1"/>
</dbReference>
<dbReference type="SMR" id="Q6E804"/>
<dbReference type="FunCoup" id="Q6E804">
    <property type="interactions" value="289"/>
</dbReference>
<dbReference type="STRING" id="9913.ENSBTAP00000027887"/>
<dbReference type="CarbonylDB" id="Q6E804"/>
<dbReference type="PaxDb" id="9913-ENSBTAP00000027887"/>
<dbReference type="Ensembl" id="ENSBTAT00000027887.6">
    <property type="protein sequence ID" value="ENSBTAP00000027887.4"/>
    <property type="gene ID" value="ENSBTAG00000020936.6"/>
</dbReference>
<dbReference type="GeneID" id="444867"/>
<dbReference type="KEGG" id="bta:444867"/>
<dbReference type="CTD" id="64127"/>
<dbReference type="VEuPathDB" id="HostDB:ENSBTAG00000020936"/>
<dbReference type="VGNC" id="VGNC:32151">
    <property type="gene designation" value="NOD2"/>
</dbReference>
<dbReference type="eggNOG" id="KOG4308">
    <property type="taxonomic scope" value="Eukaryota"/>
</dbReference>
<dbReference type="GeneTree" id="ENSGT00940000160934"/>
<dbReference type="HOGENOM" id="CLU_011291_0_0_1"/>
<dbReference type="InParanoid" id="Q6E804"/>
<dbReference type="OMA" id="HCCWPDA"/>
<dbReference type="OrthoDB" id="120976at2759"/>
<dbReference type="TreeFam" id="TF352118"/>
<dbReference type="Reactome" id="R-BTA-168638">
    <property type="pathway name" value="NOD1/2 Signaling Pathway"/>
</dbReference>
<dbReference type="Reactome" id="R-BTA-450302">
    <property type="pathway name" value="activated TAK1 mediates p38 MAPK activation"/>
</dbReference>
<dbReference type="Reactome" id="R-BTA-450321">
    <property type="pathway name" value="JNK (c-Jun kinases) phosphorylation and activation mediated by activated human TAK1"/>
</dbReference>
<dbReference type="Reactome" id="R-BTA-5689896">
    <property type="pathway name" value="Ovarian tumor domain proteases"/>
</dbReference>
<dbReference type="Proteomes" id="UP000009136">
    <property type="component" value="Chromosome 18"/>
</dbReference>
<dbReference type="Bgee" id="ENSBTAG00000020936">
    <property type="expression patterns" value="Expressed in neutrophil and 97 other cell types or tissues"/>
</dbReference>
<dbReference type="GO" id="GO:0016323">
    <property type="term" value="C:basolateral plasma membrane"/>
    <property type="evidence" value="ECO:0007669"/>
    <property type="project" value="UniProtKB-SubCell"/>
</dbReference>
<dbReference type="GO" id="GO:0009986">
    <property type="term" value="C:cell surface"/>
    <property type="evidence" value="ECO:0007669"/>
    <property type="project" value="Ensembl"/>
</dbReference>
<dbReference type="GO" id="GO:0005737">
    <property type="term" value="C:cytoplasm"/>
    <property type="evidence" value="ECO:0000250"/>
    <property type="project" value="UniProtKB"/>
</dbReference>
<dbReference type="GO" id="GO:0005856">
    <property type="term" value="C:cytoskeleton"/>
    <property type="evidence" value="ECO:0000250"/>
    <property type="project" value="UniProtKB"/>
</dbReference>
<dbReference type="GO" id="GO:0005829">
    <property type="term" value="C:cytosol"/>
    <property type="evidence" value="ECO:0000318"/>
    <property type="project" value="GO_Central"/>
</dbReference>
<dbReference type="GO" id="GO:0019897">
    <property type="term" value="C:extrinsic component of plasma membrane"/>
    <property type="evidence" value="ECO:0000250"/>
    <property type="project" value="UniProtKB"/>
</dbReference>
<dbReference type="GO" id="GO:0005794">
    <property type="term" value="C:Golgi apparatus"/>
    <property type="evidence" value="ECO:0007669"/>
    <property type="project" value="Ensembl"/>
</dbReference>
<dbReference type="GO" id="GO:0005739">
    <property type="term" value="C:mitochondrion"/>
    <property type="evidence" value="ECO:0007669"/>
    <property type="project" value="UniProtKB-SubCell"/>
</dbReference>
<dbReference type="GO" id="GO:0045335">
    <property type="term" value="C:phagocytic vesicle"/>
    <property type="evidence" value="ECO:0007669"/>
    <property type="project" value="Ensembl"/>
</dbReference>
<dbReference type="GO" id="GO:0032991">
    <property type="term" value="C:protein-containing complex"/>
    <property type="evidence" value="ECO:0000250"/>
    <property type="project" value="UniProtKB"/>
</dbReference>
<dbReference type="GO" id="GO:0031982">
    <property type="term" value="C:vesicle"/>
    <property type="evidence" value="ECO:0000250"/>
    <property type="project" value="UniProtKB"/>
</dbReference>
<dbReference type="GO" id="GO:0003779">
    <property type="term" value="F:actin binding"/>
    <property type="evidence" value="ECO:0007669"/>
    <property type="project" value="Ensembl"/>
</dbReference>
<dbReference type="GO" id="GO:0043531">
    <property type="term" value="F:ADP binding"/>
    <property type="evidence" value="ECO:0000250"/>
    <property type="project" value="UniProtKB"/>
</dbReference>
<dbReference type="GO" id="GO:0005524">
    <property type="term" value="F:ATP binding"/>
    <property type="evidence" value="ECO:0007669"/>
    <property type="project" value="UniProtKB-KW"/>
</dbReference>
<dbReference type="GO" id="GO:0050700">
    <property type="term" value="F:CARD domain binding"/>
    <property type="evidence" value="ECO:0007669"/>
    <property type="project" value="Ensembl"/>
</dbReference>
<dbReference type="GO" id="GO:0030544">
    <property type="term" value="F:Hsp70 protein binding"/>
    <property type="evidence" value="ECO:0007669"/>
    <property type="project" value="Ensembl"/>
</dbReference>
<dbReference type="GO" id="GO:0051879">
    <property type="term" value="F:Hsp90 protein binding"/>
    <property type="evidence" value="ECO:0007669"/>
    <property type="project" value="Ensembl"/>
</dbReference>
<dbReference type="GO" id="GO:0032500">
    <property type="term" value="F:muramyl dipeptide binding"/>
    <property type="evidence" value="ECO:0000250"/>
    <property type="project" value="UniProtKB"/>
</dbReference>
<dbReference type="GO" id="GO:0038187">
    <property type="term" value="F:pattern recognition receptor activity"/>
    <property type="evidence" value="ECO:0000250"/>
    <property type="project" value="UniProtKB"/>
</dbReference>
<dbReference type="GO" id="GO:0042834">
    <property type="term" value="F:peptidoglycan binding"/>
    <property type="evidence" value="ECO:0007669"/>
    <property type="project" value="Ensembl"/>
</dbReference>
<dbReference type="GO" id="GO:0019901">
    <property type="term" value="F:protein kinase binding"/>
    <property type="evidence" value="ECO:0007669"/>
    <property type="project" value="Ensembl"/>
</dbReference>
<dbReference type="GO" id="GO:0044877">
    <property type="term" value="F:protein-containing complex binding"/>
    <property type="evidence" value="ECO:0007669"/>
    <property type="project" value="Ensembl"/>
</dbReference>
<dbReference type="GO" id="GO:0043130">
    <property type="term" value="F:ubiquitin binding"/>
    <property type="evidence" value="ECO:0000250"/>
    <property type="project" value="UniProtKB"/>
</dbReference>
<dbReference type="GO" id="GO:0002250">
    <property type="term" value="P:adaptive immune response"/>
    <property type="evidence" value="ECO:0007669"/>
    <property type="project" value="UniProtKB-KW"/>
</dbReference>
<dbReference type="GO" id="GO:0140367">
    <property type="term" value="P:antibacterial innate immune response"/>
    <property type="evidence" value="ECO:0007669"/>
    <property type="project" value="Ensembl"/>
</dbReference>
<dbReference type="GO" id="GO:0006914">
    <property type="term" value="P:autophagy"/>
    <property type="evidence" value="ECO:0007669"/>
    <property type="project" value="UniProtKB-KW"/>
</dbReference>
<dbReference type="GO" id="GO:0007249">
    <property type="term" value="P:canonical NF-kappaB signal transduction"/>
    <property type="evidence" value="ECO:0007669"/>
    <property type="project" value="Ensembl"/>
</dbReference>
<dbReference type="GO" id="GO:0071222">
    <property type="term" value="P:cellular response to lipopolysaccharide"/>
    <property type="evidence" value="ECO:0000250"/>
    <property type="project" value="UniProtKB"/>
</dbReference>
<dbReference type="GO" id="GO:0071225">
    <property type="term" value="P:cellular response to muramyl dipeptide"/>
    <property type="evidence" value="ECO:0000250"/>
    <property type="project" value="UniProtKB"/>
</dbReference>
<dbReference type="GO" id="GO:0042742">
    <property type="term" value="P:defense response to bacterium"/>
    <property type="evidence" value="ECO:0000250"/>
    <property type="project" value="UniProtKB"/>
</dbReference>
<dbReference type="GO" id="GO:0016045">
    <property type="term" value="P:detection of bacterium"/>
    <property type="evidence" value="ECO:0007669"/>
    <property type="project" value="Ensembl"/>
</dbReference>
<dbReference type="GO" id="GO:0032498">
    <property type="term" value="P:detection of muramyl dipeptide"/>
    <property type="evidence" value="ECO:0007669"/>
    <property type="project" value="Ensembl"/>
</dbReference>
<dbReference type="GO" id="GO:0048874">
    <property type="term" value="P:host-mediated regulation of intestinal microbiota composition"/>
    <property type="evidence" value="ECO:0000250"/>
    <property type="project" value="UniProtKB"/>
</dbReference>
<dbReference type="GO" id="GO:0045087">
    <property type="term" value="P:innate immune response"/>
    <property type="evidence" value="ECO:0000250"/>
    <property type="project" value="UniProtKB"/>
</dbReference>
<dbReference type="GO" id="GO:0036335">
    <property type="term" value="P:intestinal stem cell homeostasis"/>
    <property type="evidence" value="ECO:0000250"/>
    <property type="project" value="UniProtKB"/>
</dbReference>
<dbReference type="GO" id="GO:0035556">
    <property type="term" value="P:intracellular signal transduction"/>
    <property type="evidence" value="ECO:0000318"/>
    <property type="project" value="GO_Central"/>
</dbReference>
<dbReference type="GO" id="GO:0030277">
    <property type="term" value="P:maintenance of gastrointestinal epithelium"/>
    <property type="evidence" value="ECO:0007669"/>
    <property type="project" value="Ensembl"/>
</dbReference>
<dbReference type="GO" id="GO:0070431">
    <property type="term" value="P:nucleotide-binding oligomerization domain containing 2 signaling pathway"/>
    <property type="evidence" value="ECO:0000250"/>
    <property type="project" value="UniProtKB"/>
</dbReference>
<dbReference type="GO" id="GO:0050871">
    <property type="term" value="P:positive regulation of B cell activation"/>
    <property type="evidence" value="ECO:0007669"/>
    <property type="project" value="Ensembl"/>
</dbReference>
<dbReference type="GO" id="GO:0043123">
    <property type="term" value="P:positive regulation of canonical NF-kappaB signal transduction"/>
    <property type="evidence" value="ECO:0000250"/>
    <property type="project" value="UniProtKB"/>
</dbReference>
<dbReference type="GO" id="GO:0002720">
    <property type="term" value="P:positive regulation of cytokine production involved in immune response"/>
    <property type="evidence" value="ECO:0007669"/>
    <property type="project" value="Ensembl"/>
</dbReference>
<dbReference type="GO" id="GO:1900017">
    <property type="term" value="P:positive regulation of cytokine production involved in inflammatory response"/>
    <property type="evidence" value="ECO:0007669"/>
    <property type="project" value="Ensembl"/>
</dbReference>
<dbReference type="GO" id="GO:0046645">
    <property type="term" value="P:positive regulation of gamma-delta T cell activation"/>
    <property type="evidence" value="ECO:0000315"/>
    <property type="project" value="BHF-UCL"/>
</dbReference>
<dbReference type="GO" id="GO:0032731">
    <property type="term" value="P:positive regulation of interleukin-1 beta production"/>
    <property type="evidence" value="ECO:0007669"/>
    <property type="project" value="Ensembl"/>
</dbReference>
<dbReference type="GO" id="GO:0032740">
    <property type="term" value="P:positive regulation of interleukin-17 production"/>
    <property type="evidence" value="ECO:0007669"/>
    <property type="project" value="Ensembl"/>
</dbReference>
<dbReference type="GO" id="GO:0032755">
    <property type="term" value="P:positive regulation of interleukin-6 production"/>
    <property type="evidence" value="ECO:0007669"/>
    <property type="project" value="Ensembl"/>
</dbReference>
<dbReference type="GO" id="GO:0032757">
    <property type="term" value="P:positive regulation of interleukin-8 production"/>
    <property type="evidence" value="ECO:0007669"/>
    <property type="project" value="Ensembl"/>
</dbReference>
<dbReference type="GO" id="GO:0046330">
    <property type="term" value="P:positive regulation of JNK cascade"/>
    <property type="evidence" value="ECO:0007669"/>
    <property type="project" value="Ensembl"/>
</dbReference>
<dbReference type="GO" id="GO:1901526">
    <property type="term" value="P:positive regulation of mitophagy"/>
    <property type="evidence" value="ECO:0000250"/>
    <property type="project" value="UniProtKB"/>
</dbReference>
<dbReference type="GO" id="GO:0051092">
    <property type="term" value="P:positive regulation of NF-kappaB transcription factor activity"/>
    <property type="evidence" value="ECO:0000250"/>
    <property type="project" value="UniProtKB"/>
</dbReference>
<dbReference type="GO" id="GO:1901224">
    <property type="term" value="P:positive regulation of non-canonical NF-kappaB signal transduction"/>
    <property type="evidence" value="ECO:0007669"/>
    <property type="project" value="Ensembl"/>
</dbReference>
<dbReference type="GO" id="GO:1902523">
    <property type="term" value="P:positive regulation of protein K63-linked ubiquitination"/>
    <property type="evidence" value="ECO:0007669"/>
    <property type="project" value="Ensembl"/>
</dbReference>
<dbReference type="GO" id="GO:0032874">
    <property type="term" value="P:positive regulation of stress-activated MAPK cascade"/>
    <property type="evidence" value="ECO:0007669"/>
    <property type="project" value="Ensembl"/>
</dbReference>
<dbReference type="GO" id="GO:0045944">
    <property type="term" value="P:positive regulation of transcription by RNA polymerase II"/>
    <property type="evidence" value="ECO:0000250"/>
    <property type="project" value="UniProtKB"/>
</dbReference>
<dbReference type="GO" id="GO:0032760">
    <property type="term" value="P:positive regulation of tumor necrosis factor production"/>
    <property type="evidence" value="ECO:0007669"/>
    <property type="project" value="Ensembl"/>
</dbReference>
<dbReference type="GO" id="GO:0002830">
    <property type="term" value="P:positive regulation of type 2 immune response"/>
    <property type="evidence" value="ECO:0000250"/>
    <property type="project" value="BHF-UCL"/>
</dbReference>
<dbReference type="GO" id="GO:0042981">
    <property type="term" value="P:regulation of apoptotic process"/>
    <property type="evidence" value="ECO:0007669"/>
    <property type="project" value="InterPro"/>
</dbReference>
<dbReference type="GO" id="GO:0032098">
    <property type="term" value="P:regulation of appetite"/>
    <property type="evidence" value="ECO:0000250"/>
    <property type="project" value="UniProtKB"/>
</dbReference>
<dbReference type="GO" id="GO:0050727">
    <property type="term" value="P:regulation of inflammatory response"/>
    <property type="evidence" value="ECO:0007669"/>
    <property type="project" value="Ensembl"/>
</dbReference>
<dbReference type="GO" id="GO:0032495">
    <property type="term" value="P:response to muramyl dipeptide"/>
    <property type="evidence" value="ECO:0000314"/>
    <property type="project" value="BHF-UCL"/>
</dbReference>
<dbReference type="GO" id="GO:0001659">
    <property type="term" value="P:temperature homeostasis"/>
    <property type="evidence" value="ECO:0000250"/>
    <property type="project" value="UniProtKB"/>
</dbReference>
<dbReference type="FunFam" id="3.80.10.10:FF:000239">
    <property type="entry name" value="Nucleotide-binding oligomerization domain-containing 2"/>
    <property type="match status" value="1"/>
</dbReference>
<dbReference type="FunFam" id="1.10.533.10:FF:000032">
    <property type="entry name" value="Nucleotide-binding oligomerization domain-containing protein 2"/>
    <property type="match status" value="1"/>
</dbReference>
<dbReference type="FunFam" id="1.10.533.10:FF:000045">
    <property type="entry name" value="Nucleotide-binding oligomerization domain-containing protein 2"/>
    <property type="match status" value="1"/>
</dbReference>
<dbReference type="FunFam" id="3.40.50.300:FF:000940">
    <property type="entry name" value="Nucleotide-binding oligomerization domain-containing protein 2"/>
    <property type="match status" value="1"/>
</dbReference>
<dbReference type="Gene3D" id="1.10.533.10">
    <property type="entry name" value="Death Domain, Fas"/>
    <property type="match status" value="2"/>
</dbReference>
<dbReference type="Gene3D" id="3.40.50.300">
    <property type="entry name" value="P-loop containing nucleotide triphosphate hydrolases"/>
    <property type="match status" value="1"/>
</dbReference>
<dbReference type="Gene3D" id="3.80.10.10">
    <property type="entry name" value="Ribonuclease Inhibitor"/>
    <property type="match status" value="1"/>
</dbReference>
<dbReference type="InterPro" id="IPR001315">
    <property type="entry name" value="CARD"/>
</dbReference>
<dbReference type="InterPro" id="IPR011029">
    <property type="entry name" value="DEATH-like_dom_sf"/>
</dbReference>
<dbReference type="InterPro" id="IPR001611">
    <property type="entry name" value="Leu-rich_rpt"/>
</dbReference>
<dbReference type="InterPro" id="IPR032675">
    <property type="entry name" value="LRR_dom_sf"/>
</dbReference>
<dbReference type="InterPro" id="IPR007111">
    <property type="entry name" value="NACHT_NTPase"/>
</dbReference>
<dbReference type="InterPro" id="IPR051261">
    <property type="entry name" value="NLR"/>
</dbReference>
<dbReference type="InterPro" id="IPR041267">
    <property type="entry name" value="NLRP_HD2"/>
</dbReference>
<dbReference type="InterPro" id="IPR041075">
    <property type="entry name" value="NOD1/2_WH"/>
</dbReference>
<dbReference type="InterPro" id="IPR027417">
    <property type="entry name" value="P-loop_NTPase"/>
</dbReference>
<dbReference type="PANTHER" id="PTHR24106">
    <property type="entry name" value="NACHT, LRR AND CARD DOMAINS-CONTAINING"/>
    <property type="match status" value="1"/>
</dbReference>
<dbReference type="Pfam" id="PF00619">
    <property type="entry name" value="CARD"/>
    <property type="match status" value="2"/>
</dbReference>
<dbReference type="Pfam" id="PF13516">
    <property type="entry name" value="LRR_6"/>
    <property type="match status" value="4"/>
</dbReference>
<dbReference type="Pfam" id="PF05729">
    <property type="entry name" value="NACHT"/>
    <property type="match status" value="1"/>
</dbReference>
<dbReference type="Pfam" id="PF17776">
    <property type="entry name" value="NLRC4_HD2"/>
    <property type="match status" value="1"/>
</dbReference>
<dbReference type="Pfam" id="PF17779">
    <property type="entry name" value="NOD2_WH"/>
    <property type="match status" value="1"/>
</dbReference>
<dbReference type="SMART" id="SM00368">
    <property type="entry name" value="LRR_RI"/>
    <property type="match status" value="8"/>
</dbReference>
<dbReference type="SUPFAM" id="SSF47986">
    <property type="entry name" value="DEATH domain"/>
    <property type="match status" value="2"/>
</dbReference>
<dbReference type="SUPFAM" id="SSF52540">
    <property type="entry name" value="P-loop containing nucleoside triphosphate hydrolases"/>
    <property type="match status" value="1"/>
</dbReference>
<dbReference type="SUPFAM" id="SSF52047">
    <property type="entry name" value="RNI-like"/>
    <property type="match status" value="1"/>
</dbReference>
<dbReference type="PROSITE" id="PS50209">
    <property type="entry name" value="CARD"/>
    <property type="match status" value="2"/>
</dbReference>
<dbReference type="PROSITE" id="PS51450">
    <property type="entry name" value="LRR"/>
    <property type="match status" value="5"/>
</dbReference>
<dbReference type="PROSITE" id="PS50837">
    <property type="entry name" value="NACHT"/>
    <property type="match status" value="1"/>
</dbReference>
<reference key="1">
    <citation type="journal article" date="2006" name="Mamm. Genome">
        <title>Identification of genetic variation and putative regulatory regions in bovine CARD15.</title>
        <authorList>
            <person name="Taylor K.H."/>
            <person name="Taylor J.F."/>
            <person name="White S.N."/>
            <person name="Womack J.E."/>
        </authorList>
    </citation>
    <scope>NUCLEOTIDE SEQUENCE [GENOMIC DNA / MRNA]</scope>
    <scope>VARIANTS ALA-70; MET-196; ASN-505; GLN-681; HIS-689; ARG-733 AND LEU-1007</scope>
</reference>
<accession>Q6E804</accession>
<gene>
    <name type="primary">NOD2</name>
    <name type="synonym">CARD15</name>
</gene>
<comment type="function">
    <text evidence="2 3">Pattern recognition receptor (PRR) that detects bacterial peptidoglycan fragments and other danger signals and plays an important role in gastrointestinal immunity. Specifically activated by muramyl dipeptide (MDP), a fragment of bacterial peptidoglycan found in every bacterial peptidoglycan type. NOD2 specifically recognizes and binds 6-O-phospho-MDP, the phosphorylated form of MDP, which is generated by NAGK. 6-O-phospho-MDP-binding triggers oligomerization that facilitates the binding and subsequent activation of the proximal adapter receptor-interacting RIPK2. Following recruitment, RIPK2 undergoes 'Met-1'- (linear) and 'Lys-63'-linked polyubiquitination by E3 ubiquitin-protein ligases XIAP, BIRC2, BIRC3 and the LUBAC complex, becoming a scaffolding protein for downstream effectors, triggering activation of the NF-kappa-B and MAP kinases signaling. This in turn leads to the transcriptional activation of hundreds of genes involved in immune response (By similarity). Its ability to detect bacterial MDP plays a central role in maintaining the equilibrium between intestinal microbiota and host immune responses to control inflammation. An imbalance in this relationship results in dysbiosis, whereby pathogenic bacteria prevail on commensals, causing damage in the intestinal epithelial barrier as well as allowing bacterial invasion and inflammation. Acts as a regulator of appetite by sensing MDP in a subset of brain neurons: microbiota-derived MDP reach the brain, where they bind and activate NOD2 in inhibitory hypothalamic neurons, decreasing neuronal activity, thereby regulating satiety and body temperature. NOD2-dependent MDP-sensing of bacterial cell walls in the intestinal epithelial compartment contributes to sustained postnatal growth upon undernutrition (By similarity). Also plays a role in antiviral response by acting as a sensor of single-stranded RNA (ssRNA) from viruses: upon ssRNA-binding, interacts with MAVS, leading to activation of interferon regulatory factor-3/IRF3 and expression of type I interferon. Also acts as a regulator of autophagy in dendritic cells via its interaction with ATG16L1, possibly by recruiting ATG16L1 at the site of bacterial entry (By similarity). NOD2 activation in the small intestine crypt also contributes to intestinal stem cells survival and function: acts by promoting mitophagy via its association with ATG16L1. In addition to its main role in innate immunity, also regulates the adaptive immune system by acting as regulator of helper T-cell and regulatory T-cells (Tregs) (By similarity). Besides recognizing pathogens, also involved in the endoplasmic reticulum stress response: acts by sensing and binding to the cytosolic metabolite sphingosine-1-phosphate generated in response to endoplasmic reticulum stress, initiating an inflammation process that leads to activation of the NF-kappa-B and MAP kinases signaling. May also be involved in NLRP1 activation following activation by MDP, leading to CASP1 activation and IL1B release in macrophages (By similarity).</text>
</comment>
<comment type="activity regulation">
    <text evidence="1">ADP-binding promotes an inactive closed conformation.</text>
</comment>
<comment type="subunit">
    <text evidence="3">Homooligomer: homooligomerizes following muramyl dipeptide (MDP)-binding, promoting RIPK2 recruitment. Interacts (via CARD domain) with RIPK2 (via CARD domain). Following RIPK2 recruitment, RIPK2 homooligomerizes via its CARD domain and forms long filaments named RIPosomes. Interacts (via CARD domain) with ubiquitin; inhibiting interaction with RIPK2. Component of a signaling complex consisting of ARHGEF2, NOD2 and RIPK2. Interacts with ANKRD17 (via N-terminus). Interacts with HSPA1A; the interaction enhances NOD2 stability. Interacts (via both CARD domains) with HSP90; the interaction enhances NOD2 stability. Interacts (via CARD domain) with SOCS3; the interaction promotes NOD2 degradation. Interacts (via CARD domain) with ERBIN; the interaction inhibits activation of NOD2. Interacts with MAPKBP1; the interaction is enhanced in the presence of muramyl dipeptide (MDP) and inhibits NOD2 homooligomerization and activation. Interacts with INAVA; the interaction takes place upon Pattern recognition receptor (PRR) stimulation. Interacts (via NACHT domain) with CARD9. Interacts (via CARD domain) with CASP1; this interaction leads to IL1B processing. Also interacts with CASP4. Interacts with NLRP1; this interaction is enhanced in the presence of muramyl dipeptide (MDP) and leads to increased IL1B release. Interacts with NLRP12; this interaction promotes degradation of NOD2 through the ubiquitin-proteasome pathway. Interacts with ANKHD1, C10orf67, CHMP5, DOCK7, ENTR1, KRT15, LDOC1, PPP1R12C, PPP2R3B, TRIM41 and VIM. Interacts with MAVS; interaction takes place following single-stranded RNA (ssRNA)-binding. Interacts with ATG16L1. Interacts with IRGM; promoting IRGM 'Lys-63'-linked polyubiquitination, which is required for interactions with the core autophagy factors.</text>
</comment>
<comment type="subcellular location">
    <subcellularLocation>
        <location evidence="3">Cell membrane</location>
        <topology evidence="3">Lipid-anchor</topology>
    </subcellularLocation>
    <subcellularLocation>
        <location evidence="3">Basolateral cell membrane</location>
    </subcellularLocation>
    <subcellularLocation>
        <location evidence="3">Cytoplasm</location>
    </subcellularLocation>
    <subcellularLocation>
        <location evidence="3">Mitochondrion</location>
    </subcellularLocation>
    <text evidence="3">Palmitoylation promotes localization to the cell membrane, where it detects bacterial invasion at the point of entry.</text>
</comment>
<comment type="domain">
    <text evidence="3">The ATG16L1-binding motif mediates interaction with ATG16L1.</text>
</comment>
<comment type="domain">
    <text evidence="3">Intramolecular interactions between the N-terminal moiety and the leucine-rich repeats (LRR) may be important for autoinhibition in the absence of activating signal.</text>
</comment>
<comment type="domain">
    <text evidence="3">The LRR repeats recognize and bind muramyl dipeptide (MDP).</text>
</comment>
<comment type="domain">
    <text evidence="3">The NACHT domain recognizes and binds sphingosine-1-phosphate in response to endoplasmic reticulum stress.</text>
</comment>
<comment type="PTM">
    <text evidence="3">Palmitoylated by ZDHHC5; palmitoylation is required for proper recruitment to the bacterial entry site and hence for proper signaling upon cognate peptidoglycan detection. Palmitoylation promotes localization to the cell membrane. Palmitoylation protects from SQSTM1/p62-dependent autophagic degradation.</text>
</comment>
<comment type="PTM">
    <text evidence="3">Polyubiquitinated by TRIM27, leading to proteasome-mediated degradation. Polyubiquitinated and degraded following muramyl dipeptide (MDP) stimulation, conferring MDP tolerance and preventing septic shock.</text>
</comment>
<comment type="PTM">
    <text evidence="3">Degraded via selective autophagy following interaction with IRGM. IRGM promotes NOD2-RIPK2 RIPosome recruitment to autophagosome membranes, promoting their SQSTM1/p62-dependent autophagic degradation.</text>
</comment>
<comment type="PTM">
    <text evidence="3">O-glycosylated by OGT, O-GlcNAcylation increases protein stability.</text>
</comment>
<comment type="similarity">
    <text evidence="8">Belongs to the NOD1-NOD2 family.</text>
</comment>
<keyword id="KW-1064">Adaptive immunity</keyword>
<keyword id="KW-0067">ATP-binding</keyword>
<keyword id="KW-0072">Autophagy</keyword>
<keyword id="KW-1003">Cell membrane</keyword>
<keyword id="KW-0963">Cytoplasm</keyword>
<keyword id="KW-0325">Glycoprotein</keyword>
<keyword id="KW-0391">Immunity</keyword>
<keyword id="KW-0399">Innate immunity</keyword>
<keyword id="KW-0433">Leucine-rich repeat</keyword>
<keyword id="KW-0449">Lipoprotein</keyword>
<keyword id="KW-0472">Membrane</keyword>
<keyword id="KW-0496">Mitochondrion</keyword>
<keyword id="KW-0547">Nucleotide-binding</keyword>
<keyword id="KW-0564">Palmitate</keyword>
<keyword id="KW-1185">Reference proteome</keyword>
<keyword id="KW-0677">Repeat</keyword>
<keyword id="KW-0832">Ubl conjugation</keyword>
<evidence type="ECO:0000250" key="1">
    <source>
        <dbReference type="UniProtKB" id="G1T469"/>
    </source>
</evidence>
<evidence type="ECO:0000250" key="2">
    <source>
        <dbReference type="UniProtKB" id="Q8K3Z0"/>
    </source>
</evidence>
<evidence type="ECO:0000250" key="3">
    <source>
        <dbReference type="UniProtKB" id="Q9HC29"/>
    </source>
</evidence>
<evidence type="ECO:0000255" key="4">
    <source>
        <dbReference type="PROSITE-ProRule" id="PRU00046"/>
    </source>
</evidence>
<evidence type="ECO:0000255" key="5">
    <source>
        <dbReference type="PROSITE-ProRule" id="PRU00136"/>
    </source>
</evidence>
<evidence type="ECO:0000256" key="6">
    <source>
        <dbReference type="SAM" id="MobiDB-lite"/>
    </source>
</evidence>
<evidence type="ECO:0000269" key="7">
    <source>
    </source>
</evidence>
<evidence type="ECO:0000305" key="8"/>
<sequence length="1013" mass="112800">MCAQDAFQTQRSQLVELLVSGSLEGFESILDRLLSREVLSWEDYEGLSLVGQPISHLARRLLDTIWNKGTWGCEQLTAAVREAQADSQPPELPSSWDPHSPHPARDLQSHRPAIVRRLYGHVEGVLDLTQQRGFISQYETDEIRRPIFTSSQRARRLLDLATVKANGLAAFLLQCIQELPVPLALPFEDAACKKYVSKLRTVISAQSRFLSTYDGAENLCLEEVYTENVLEIQMEVGMAGPSQQSPTTLGLEELFSTRDHFNKEADTVLVVGEAGSGKSTLLQQLHLLWASGRAFQEFLFVFPFSCRQLQCLVKPLSMRTLLFEHCCWPDLGPQDVFQVLLDHPERILLTFDGFDEFRFRFTDQERHCCPTAPTSVQSLLFNLLQGNLLKNARKVLTSRPSAVSASLRKHVRTELSLKGFSEEGIELYLRKRHREPGVADRLLCLLRATSALHGLCHLPVFSWMVSKCHEELLLQGRGSPKTTTDMYLLILRHFLLHASPLPLATHGLGPSLIQGRLPTLLHLGRLALWGLGTCCYVFSAKQLQAAHVDSEDLSLGFLVLAKRVVPGSTAPLEFLHITFQCFFAAFYLALSADTPPSSLRHLFQDHRPESSPLARVLPKLFLRGSRCREGSVAALLQGAEPHNLQITGAFLAGLLSQEHRSLLAECQASETALLRRWDCVRRCLTRSLREHFRSIPPALPGEAKSMHALPGFLWLIRSLYEMQEERLAREAVCRLNVGHLKLTFCGVGPAECAALAFVLRHLRRPVALQLDHNSVGDIGVEQLLPCLGVCKALYLRDNNISDRGICKLVEHALRCEQLQKLALFNNKLTDGCAHSMARLLACKQNFLALRLGNNHITAAGAEVLAQGLRTNNSLQFLGFWGNQVGDEGAQALAAALGDHQSLRWLSLVGNNIGSVGAQALALMLEKNMALEELCLEENHVQDEGVCFLAKGLARNSSLKVLKLSNNHISSLGAEALLRALEKNDTILEVWLRGNTFSPEEIEKLSHQDTRLLL</sequence>
<proteinExistence type="evidence at transcript level"/>
<organism>
    <name type="scientific">Bos taurus</name>
    <name type="common">Bovine</name>
    <dbReference type="NCBI Taxonomy" id="9913"/>
    <lineage>
        <taxon>Eukaryota</taxon>
        <taxon>Metazoa</taxon>
        <taxon>Chordata</taxon>
        <taxon>Craniata</taxon>
        <taxon>Vertebrata</taxon>
        <taxon>Euteleostomi</taxon>
        <taxon>Mammalia</taxon>
        <taxon>Eutheria</taxon>
        <taxon>Laurasiatheria</taxon>
        <taxon>Artiodactyla</taxon>
        <taxon>Ruminantia</taxon>
        <taxon>Pecora</taxon>
        <taxon>Bovidae</taxon>
        <taxon>Bovinae</taxon>
        <taxon>Bos</taxon>
    </lineage>
</organism>
<protein>
    <recommendedName>
        <fullName>Nucleotide-binding oligomerization domain-containing protein 2</fullName>
    </recommendedName>
    <alternativeName>
        <fullName>Caspase recruitment domain-containing protein 15</fullName>
    </alternativeName>
</protein>